<dbReference type="EC" id="2.4.2.39" evidence="7"/>
<dbReference type="EC" id="2.4.-.-"/>
<dbReference type="EMBL" id="KJ138936">
    <property type="protein sequence ID" value="AHL38876.1"/>
    <property type="molecule type" value="mRNA"/>
</dbReference>
<dbReference type="EMBL" id="AC011765">
    <property type="protein sequence ID" value="AAG52374.1"/>
    <property type="molecule type" value="Genomic_DNA"/>
</dbReference>
<dbReference type="EMBL" id="CP002684">
    <property type="protein sequence ID" value="AEE35584.1"/>
    <property type="molecule type" value="Genomic_DNA"/>
</dbReference>
<dbReference type="EMBL" id="AY093175">
    <property type="protein sequence ID" value="AAM13174.1"/>
    <property type="molecule type" value="mRNA"/>
</dbReference>
<dbReference type="EMBL" id="BT009684">
    <property type="protein sequence ID" value="AAP81802.1"/>
    <property type="molecule type" value="mRNA"/>
</dbReference>
<dbReference type="PIR" id="E96772">
    <property type="entry name" value="E96772"/>
</dbReference>
<dbReference type="RefSeq" id="NP_177578.1">
    <property type="nucleotide sequence ID" value="NM_106098.4"/>
</dbReference>
<dbReference type="SMR" id="Q9CA75"/>
<dbReference type="BioGRID" id="28998">
    <property type="interactions" value="6"/>
</dbReference>
<dbReference type="FunCoup" id="Q9CA75">
    <property type="interactions" value="639"/>
</dbReference>
<dbReference type="STRING" id="3702.Q9CA75"/>
<dbReference type="CAZy" id="GT34">
    <property type="family name" value="Glycosyltransferase Family 34"/>
</dbReference>
<dbReference type="GlyCosmos" id="Q9CA75">
    <property type="glycosylation" value="2 sites, No reported glycans"/>
</dbReference>
<dbReference type="GlyGen" id="Q9CA75">
    <property type="glycosylation" value="2 sites"/>
</dbReference>
<dbReference type="iPTMnet" id="Q9CA75"/>
<dbReference type="PaxDb" id="3702-AT1G74380.1"/>
<dbReference type="ProteomicsDB" id="242496"/>
<dbReference type="EnsemblPlants" id="AT1G74380.1">
    <property type="protein sequence ID" value="AT1G74380.1"/>
    <property type="gene ID" value="AT1G74380"/>
</dbReference>
<dbReference type="GeneID" id="843779"/>
<dbReference type="Gramene" id="AT1G74380.1">
    <property type="protein sequence ID" value="AT1G74380.1"/>
    <property type="gene ID" value="AT1G74380"/>
</dbReference>
<dbReference type="KEGG" id="ath:AT1G74380"/>
<dbReference type="Araport" id="AT1G74380"/>
<dbReference type="TAIR" id="AT1G74380">
    <property type="gene designation" value="XXT5"/>
</dbReference>
<dbReference type="eggNOG" id="KOG4748">
    <property type="taxonomic scope" value="Eukaryota"/>
</dbReference>
<dbReference type="HOGENOM" id="CLU_034328_1_0_1"/>
<dbReference type="InParanoid" id="Q9CA75"/>
<dbReference type="OMA" id="ARYEKHN"/>
<dbReference type="OrthoDB" id="205108at2759"/>
<dbReference type="PhylomeDB" id="Q9CA75"/>
<dbReference type="BioCyc" id="ARA:AT1G74380-MONOMER"/>
<dbReference type="BioCyc" id="MetaCyc:AT1G74380-MONOMER"/>
<dbReference type="BRENDA" id="2.4.2.39">
    <property type="organism ID" value="399"/>
</dbReference>
<dbReference type="PRO" id="PR:Q9CA75"/>
<dbReference type="Proteomes" id="UP000006548">
    <property type="component" value="Chromosome 1"/>
</dbReference>
<dbReference type="ExpressionAtlas" id="Q9CA75">
    <property type="expression patterns" value="baseline and differential"/>
</dbReference>
<dbReference type="GO" id="GO:0005768">
    <property type="term" value="C:endosome"/>
    <property type="evidence" value="ECO:0007005"/>
    <property type="project" value="TAIR"/>
</dbReference>
<dbReference type="GO" id="GO:0005794">
    <property type="term" value="C:Golgi apparatus"/>
    <property type="evidence" value="ECO:0007005"/>
    <property type="project" value="TAIR"/>
</dbReference>
<dbReference type="GO" id="GO:0000139">
    <property type="term" value="C:Golgi membrane"/>
    <property type="evidence" value="ECO:0000314"/>
    <property type="project" value="TAIR"/>
</dbReference>
<dbReference type="GO" id="GO:0000138">
    <property type="term" value="C:Golgi trans cisterna"/>
    <property type="evidence" value="ECO:0000314"/>
    <property type="project" value="TAIR"/>
</dbReference>
<dbReference type="GO" id="GO:0005802">
    <property type="term" value="C:trans-Golgi network"/>
    <property type="evidence" value="ECO:0007005"/>
    <property type="project" value="TAIR"/>
</dbReference>
<dbReference type="GO" id="GO:0033843">
    <property type="term" value="F:xyloglucan 6-xylosyltransferase activity"/>
    <property type="evidence" value="ECO:0000315"/>
    <property type="project" value="TAIR"/>
</dbReference>
<dbReference type="GO" id="GO:0048767">
    <property type="term" value="P:root hair elongation"/>
    <property type="evidence" value="ECO:0000315"/>
    <property type="project" value="TAIR"/>
</dbReference>
<dbReference type="GO" id="GO:0010411">
    <property type="term" value="P:xyloglucan metabolic process"/>
    <property type="evidence" value="ECO:0000315"/>
    <property type="project" value="TAIR"/>
</dbReference>
<dbReference type="FunFam" id="3.90.550.10:FF:000032">
    <property type="entry name" value="xyloglucan 6-xylosyltransferase 2"/>
    <property type="match status" value="1"/>
</dbReference>
<dbReference type="Gene3D" id="3.90.550.10">
    <property type="entry name" value="Spore Coat Polysaccharide Biosynthesis Protein SpsA, Chain A"/>
    <property type="match status" value="1"/>
</dbReference>
<dbReference type="InterPro" id="IPR008630">
    <property type="entry name" value="Glyco_trans_34"/>
</dbReference>
<dbReference type="InterPro" id="IPR029044">
    <property type="entry name" value="Nucleotide-diphossugar_trans"/>
</dbReference>
<dbReference type="PANTHER" id="PTHR31311:SF13">
    <property type="entry name" value="XYLOGLUCAN 6-XYLOSYLTRANSFERASE 5-RELATED"/>
    <property type="match status" value="1"/>
</dbReference>
<dbReference type="PANTHER" id="PTHR31311">
    <property type="entry name" value="XYLOGLUCAN 6-XYLOSYLTRANSFERASE 5-RELATED-RELATED"/>
    <property type="match status" value="1"/>
</dbReference>
<dbReference type="Pfam" id="PF05637">
    <property type="entry name" value="Glyco_transf_34"/>
    <property type="match status" value="1"/>
</dbReference>
<name>XXT5_ARATH</name>
<proteinExistence type="evidence at protein level"/>
<evidence type="ECO:0000255" key="1"/>
<evidence type="ECO:0000256" key="2">
    <source>
        <dbReference type="SAM" id="MobiDB-lite"/>
    </source>
</evidence>
<evidence type="ECO:0000269" key="3">
    <source>
    </source>
</evidence>
<evidence type="ECO:0000269" key="4">
    <source>
    </source>
</evidence>
<evidence type="ECO:0000269" key="5">
    <source>
    </source>
</evidence>
<evidence type="ECO:0000303" key="6">
    <source>
    </source>
</evidence>
<evidence type="ECO:0000305" key="7"/>
<evidence type="ECO:0000305" key="8">
    <source>
    </source>
</evidence>
<sequence length="457" mass="51728">MGQDGSPAHKRPSGSGGGLPTTTLTNGGGRGGRGGLLPRGRQMQKTFNNIKITILCGFVTILVLRGTIGVGNLGSSSADAVNQNIIEETNRILAEIRSDSDPTDLDEPQEGDMNPNATYVLGPKITDWDSQRKVWLNQNPEFPSTVNGKARILLLTGSPPKPCDNPIGDHYLLKSVKNKIDYCRLHGIEIVYNMAHLDKELAGYWAKLPMIRRLMLSHPEVEWIWWMDSDALFTDILFQIPLARYQKHNLVIHGYPDLLFDQKSWIALNTGSFLLRNCQWSLDLLDAWAPMGPKGPIRDEAGKVLTAYLKGRPAFEADDQSALIYLLLSQKDTWMEKVFVENQYYLHGFWEGLVDRYEEMIEKYHPGLGDERWPFVTHFVGCKPCGSYADYAVERCLKSMERAFNFADNQVLKLYGFSHRGLLSPKIKRIRNETVSPLEFVDKFDIRRTPVETKPQN</sequence>
<reference key="1">
    <citation type="journal article" date="2014" name="Plant J.">
        <title>The plant glycosyltransferase clone collection for functional genomics.</title>
        <authorList>
            <person name="Lao J."/>
            <person name="Oikawa A."/>
            <person name="Bromley J.R."/>
            <person name="McInerney P."/>
            <person name="Suttangkakul A."/>
            <person name="Smith-Moritz A.M."/>
            <person name="Plahar H."/>
            <person name="Chiu T.-Y."/>
            <person name="Gonzalez Fernandez-Nino S.M.G."/>
            <person name="Ebert B."/>
            <person name="Yang F."/>
            <person name="Christiansen K.M."/>
            <person name="Hansen S.F."/>
            <person name="Stonebloom S."/>
            <person name="Adams P.D."/>
            <person name="Ronald P.C."/>
            <person name="Hillson N.J."/>
            <person name="Hadi M.Z."/>
            <person name="Vega-Sanchez M.E."/>
            <person name="Loque D."/>
            <person name="Scheller H.V."/>
            <person name="Heazlewood J.L."/>
        </authorList>
    </citation>
    <scope>NUCLEOTIDE SEQUENCE [MRNA]</scope>
    <source>
        <strain>cv. Columbia</strain>
    </source>
</reference>
<reference key="2">
    <citation type="journal article" date="2000" name="Nature">
        <title>Sequence and analysis of chromosome 1 of the plant Arabidopsis thaliana.</title>
        <authorList>
            <person name="Theologis A."/>
            <person name="Ecker J.R."/>
            <person name="Palm C.J."/>
            <person name="Federspiel N.A."/>
            <person name="Kaul S."/>
            <person name="White O."/>
            <person name="Alonso J."/>
            <person name="Altafi H."/>
            <person name="Araujo R."/>
            <person name="Bowman C.L."/>
            <person name="Brooks S.Y."/>
            <person name="Buehler E."/>
            <person name="Chan A."/>
            <person name="Chao Q."/>
            <person name="Chen H."/>
            <person name="Cheuk R.F."/>
            <person name="Chin C.W."/>
            <person name="Chung M.K."/>
            <person name="Conn L."/>
            <person name="Conway A.B."/>
            <person name="Conway A.R."/>
            <person name="Creasy T.H."/>
            <person name="Dewar K."/>
            <person name="Dunn P."/>
            <person name="Etgu P."/>
            <person name="Feldblyum T.V."/>
            <person name="Feng J.-D."/>
            <person name="Fong B."/>
            <person name="Fujii C.Y."/>
            <person name="Gill J.E."/>
            <person name="Goldsmith A.D."/>
            <person name="Haas B."/>
            <person name="Hansen N.F."/>
            <person name="Hughes B."/>
            <person name="Huizar L."/>
            <person name="Hunter J.L."/>
            <person name="Jenkins J."/>
            <person name="Johnson-Hopson C."/>
            <person name="Khan S."/>
            <person name="Khaykin E."/>
            <person name="Kim C.J."/>
            <person name="Koo H.L."/>
            <person name="Kremenetskaia I."/>
            <person name="Kurtz D.B."/>
            <person name="Kwan A."/>
            <person name="Lam B."/>
            <person name="Langin-Hooper S."/>
            <person name="Lee A."/>
            <person name="Lee J.M."/>
            <person name="Lenz C.A."/>
            <person name="Li J.H."/>
            <person name="Li Y.-P."/>
            <person name="Lin X."/>
            <person name="Liu S.X."/>
            <person name="Liu Z.A."/>
            <person name="Luros J.S."/>
            <person name="Maiti R."/>
            <person name="Marziali A."/>
            <person name="Militscher J."/>
            <person name="Miranda M."/>
            <person name="Nguyen M."/>
            <person name="Nierman W.C."/>
            <person name="Osborne B.I."/>
            <person name="Pai G."/>
            <person name="Peterson J."/>
            <person name="Pham P.K."/>
            <person name="Rizzo M."/>
            <person name="Rooney T."/>
            <person name="Rowley D."/>
            <person name="Sakano H."/>
            <person name="Salzberg S.L."/>
            <person name="Schwartz J.R."/>
            <person name="Shinn P."/>
            <person name="Southwick A.M."/>
            <person name="Sun H."/>
            <person name="Tallon L.J."/>
            <person name="Tambunga G."/>
            <person name="Toriumi M.J."/>
            <person name="Town C.D."/>
            <person name="Utterback T."/>
            <person name="Van Aken S."/>
            <person name="Vaysberg M."/>
            <person name="Vysotskaia V.S."/>
            <person name="Walker M."/>
            <person name="Wu D."/>
            <person name="Yu G."/>
            <person name="Fraser C.M."/>
            <person name="Venter J.C."/>
            <person name="Davis R.W."/>
        </authorList>
    </citation>
    <scope>NUCLEOTIDE SEQUENCE [LARGE SCALE GENOMIC DNA]</scope>
    <source>
        <strain>cv. Columbia</strain>
    </source>
</reference>
<reference key="3">
    <citation type="journal article" date="2017" name="Plant J.">
        <title>Araport11: a complete reannotation of the Arabidopsis thaliana reference genome.</title>
        <authorList>
            <person name="Cheng C.Y."/>
            <person name="Krishnakumar V."/>
            <person name="Chan A.P."/>
            <person name="Thibaud-Nissen F."/>
            <person name="Schobel S."/>
            <person name="Town C.D."/>
        </authorList>
    </citation>
    <scope>GENOME REANNOTATION</scope>
    <source>
        <strain>cv. Columbia</strain>
    </source>
</reference>
<reference key="4">
    <citation type="journal article" date="2003" name="Science">
        <title>Empirical analysis of transcriptional activity in the Arabidopsis genome.</title>
        <authorList>
            <person name="Yamada K."/>
            <person name="Lim J."/>
            <person name="Dale J.M."/>
            <person name="Chen H."/>
            <person name="Shinn P."/>
            <person name="Palm C.J."/>
            <person name="Southwick A.M."/>
            <person name="Wu H.C."/>
            <person name="Kim C.J."/>
            <person name="Nguyen M."/>
            <person name="Pham P.K."/>
            <person name="Cheuk R.F."/>
            <person name="Karlin-Newmann G."/>
            <person name="Liu S.X."/>
            <person name="Lam B."/>
            <person name="Sakano H."/>
            <person name="Wu T."/>
            <person name="Yu G."/>
            <person name="Miranda M."/>
            <person name="Quach H.L."/>
            <person name="Tripp M."/>
            <person name="Chang C.H."/>
            <person name="Lee J.M."/>
            <person name="Toriumi M.J."/>
            <person name="Chan M.M."/>
            <person name="Tang C.C."/>
            <person name="Onodera C.S."/>
            <person name="Deng J.M."/>
            <person name="Akiyama K."/>
            <person name="Ansari Y."/>
            <person name="Arakawa T."/>
            <person name="Banh J."/>
            <person name="Banno F."/>
            <person name="Bowser L."/>
            <person name="Brooks S.Y."/>
            <person name="Carninci P."/>
            <person name="Chao Q."/>
            <person name="Choy N."/>
            <person name="Enju A."/>
            <person name="Goldsmith A.D."/>
            <person name="Gurjal M."/>
            <person name="Hansen N.F."/>
            <person name="Hayashizaki Y."/>
            <person name="Johnson-Hopson C."/>
            <person name="Hsuan V.W."/>
            <person name="Iida K."/>
            <person name="Karnes M."/>
            <person name="Khan S."/>
            <person name="Koesema E."/>
            <person name="Ishida J."/>
            <person name="Jiang P.X."/>
            <person name="Jones T."/>
            <person name="Kawai J."/>
            <person name="Kamiya A."/>
            <person name="Meyers C."/>
            <person name="Nakajima M."/>
            <person name="Narusaka M."/>
            <person name="Seki M."/>
            <person name="Sakurai T."/>
            <person name="Satou M."/>
            <person name="Tamse R."/>
            <person name="Vaysberg M."/>
            <person name="Wallender E.K."/>
            <person name="Wong C."/>
            <person name="Yamamura Y."/>
            <person name="Yuan S."/>
            <person name="Shinozaki K."/>
            <person name="Davis R.W."/>
            <person name="Theologis A."/>
            <person name="Ecker J.R."/>
        </authorList>
    </citation>
    <scope>NUCLEOTIDE SEQUENCE [LARGE SCALE MRNA]</scope>
    <source>
        <strain>cv. Columbia</strain>
    </source>
</reference>
<reference key="5">
    <citation type="journal article" date="2002" name="Proc. Natl. Acad. Sci. U.S.A.">
        <title>An Arabidopsis gene encoding an alpha-xylosyltransferase involved in xyloglucan biosynthesis.</title>
        <authorList>
            <person name="Faik A."/>
            <person name="Price N.J."/>
            <person name="Raikhel N.V."/>
            <person name="Keegstra K."/>
        </authorList>
    </citation>
    <scope>GENE FAMILY</scope>
    <scope>NOMENCLATURE</scope>
</reference>
<reference key="6">
    <citation type="journal article" date="2008" name="Plant J.">
        <title>Arabidopsis XXT5 gene encodes a putative alpha-1,6-xylosyltransferase that is involved in xyloglucan biosynthesis.</title>
        <authorList>
            <person name="Zabotina O.A."/>
            <person name="van de Ven W.T."/>
            <person name="Freshour G."/>
            <person name="Drakakaki G."/>
            <person name="Cavalier D."/>
            <person name="Mouille G."/>
            <person name="Hahn M.G."/>
            <person name="Keegstra K."/>
            <person name="Raikhel N.V."/>
        </authorList>
    </citation>
    <scope>FUNCTION</scope>
    <scope>SUBCELLULAR LOCATION</scope>
    <scope>TISSUE SPECIFICITY</scope>
    <scope>DISRUPTION PHENOTYPE</scope>
</reference>
<reference key="7">
    <citation type="journal article" date="2012" name="Plant Physiol.">
        <title>Xyloglucan xylosyltransferases XXT1, XXT2, and XXT5 and the glucan synthase CSLC4 form Golgi-localized multiprotein complexes.</title>
        <authorList>
            <person name="Chou Y.H."/>
            <person name="Pogorelko G."/>
            <person name="Zabotina O.A."/>
        </authorList>
    </citation>
    <scope>INTERACTION WITH XXT2 AND CSLC4</scope>
    <scope>SUBCELLULAR LOCATION</scope>
</reference>
<reference key="8">
    <citation type="journal article" date="2015" name="Plant Cell Physiol.">
        <title>Protein-protein interactions among xyloglucan-synthesizing enzymes and formation of Golgi-localized multiprotein complexes.</title>
        <authorList>
            <person name="Chou Y.H."/>
            <person name="Pogorelko G."/>
            <person name="Young Z.T."/>
            <person name="Zabotina O.A."/>
        </authorList>
    </citation>
    <scope>FUNCTION</scope>
    <scope>INTERACTION WITH FUT1 AND XLT2</scope>
    <scope>SUBCELLULAR LOCATION</scope>
</reference>
<accession>Q9CA75</accession>
<accession>W8PVU0</accession>
<gene>
    <name evidence="6" type="primary">XXT5</name>
    <name type="synonym">GT5</name>
    <name type="ordered locus">At1g74380</name>
    <name type="ORF">F1M20.6</name>
</gene>
<comment type="function">
    <text evidence="3 5">Probable xyloglucan xylosyltransferase involved in the biosynthesis of xyloglucan in roots. May act in association with XXT1 and XXT2 (PubMed:18557833). Associates with other xyloglucan-synthesizing enzymes to form multiprotein complexes for xyloglucan synthesis in the Golgi (PubMed:25392066).</text>
</comment>
<comment type="catalytic activity">
    <reaction evidence="7">
        <text>Transfers an alpha-D-xylosyl residue from UDP-D-xylose to a glucose residue in xyloglucan, forming an alpha-(1-&gt;6)-D-xylosyl-D-glucose linkage.</text>
        <dbReference type="EC" id="2.4.2.39"/>
    </reaction>
</comment>
<comment type="subunit">
    <text evidence="4 5">Interacts with XXT2 and CSLC4 (PubMed:22665445). Interacts with FUT1 and XLT2 (PubMed:25392066).</text>
</comment>
<comment type="subcellular location">
    <subcellularLocation>
        <location evidence="3 4 5">Golgi apparatus membrane</location>
        <topology evidence="8">Single-pass type II membrane protein</topology>
    </subcellularLocation>
</comment>
<comment type="tissue specificity">
    <text evidence="3">Highly expressed in roots, stems and cauline leaves, and at lower levels in rosette leaves, flowers and siliques.</text>
</comment>
<comment type="disruption phenotype">
    <text evidence="3">Root hair phenotype, characterized by short root hairs with bubble-like extrusions at the tip. Alteration of the main root cellular morphology. Reduced xyloglucan content.</text>
</comment>
<comment type="similarity">
    <text evidence="7">Belongs to the glycosyltransferase 34 family.</text>
</comment>
<organism>
    <name type="scientific">Arabidopsis thaliana</name>
    <name type="common">Mouse-ear cress</name>
    <dbReference type="NCBI Taxonomy" id="3702"/>
    <lineage>
        <taxon>Eukaryota</taxon>
        <taxon>Viridiplantae</taxon>
        <taxon>Streptophyta</taxon>
        <taxon>Embryophyta</taxon>
        <taxon>Tracheophyta</taxon>
        <taxon>Spermatophyta</taxon>
        <taxon>Magnoliopsida</taxon>
        <taxon>eudicotyledons</taxon>
        <taxon>Gunneridae</taxon>
        <taxon>Pentapetalae</taxon>
        <taxon>rosids</taxon>
        <taxon>malvids</taxon>
        <taxon>Brassicales</taxon>
        <taxon>Brassicaceae</taxon>
        <taxon>Camelineae</taxon>
        <taxon>Arabidopsis</taxon>
    </lineage>
</organism>
<keyword id="KW-0325">Glycoprotein</keyword>
<keyword id="KW-0328">Glycosyltransferase</keyword>
<keyword id="KW-0333">Golgi apparatus</keyword>
<keyword id="KW-0472">Membrane</keyword>
<keyword id="KW-1185">Reference proteome</keyword>
<keyword id="KW-0735">Signal-anchor</keyword>
<keyword id="KW-0808">Transferase</keyword>
<keyword id="KW-0812">Transmembrane</keyword>
<keyword id="KW-1133">Transmembrane helix</keyword>
<protein>
    <recommendedName>
        <fullName evidence="7">Probable xyloglucan 6-xylosyltransferase 5</fullName>
        <ecNumber evidence="7">2.4.2.39</ecNumber>
    </recommendedName>
    <alternativeName>
        <fullName>Putative glycosyltransferase 5</fullName>
        <shortName>AtGT5</shortName>
        <ecNumber>2.4.-.-</ecNumber>
    </alternativeName>
</protein>
<feature type="chain" id="PRO_0000215173" description="Probable xyloglucan 6-xylosyltransferase 5">
    <location>
        <begin position="1"/>
        <end position="457"/>
    </location>
</feature>
<feature type="topological domain" description="Cytoplasmic" evidence="1">
    <location>
        <begin position="1"/>
        <end position="51"/>
    </location>
</feature>
<feature type="transmembrane region" description="Helical; Signal-anchor for type II membrane protein" evidence="1">
    <location>
        <begin position="52"/>
        <end position="72"/>
    </location>
</feature>
<feature type="topological domain" description="Lumenal" evidence="1">
    <location>
        <begin position="73"/>
        <end position="457"/>
    </location>
</feature>
<feature type="region of interest" description="Disordered" evidence="2">
    <location>
        <begin position="1"/>
        <end position="40"/>
    </location>
</feature>
<feature type="region of interest" description="Disordered" evidence="2">
    <location>
        <begin position="97"/>
        <end position="116"/>
    </location>
</feature>
<feature type="compositionally biased region" description="Gly residues" evidence="2">
    <location>
        <begin position="26"/>
        <end position="37"/>
    </location>
</feature>
<feature type="compositionally biased region" description="Acidic residues" evidence="2">
    <location>
        <begin position="101"/>
        <end position="110"/>
    </location>
</feature>
<feature type="glycosylation site" description="N-linked (GlcNAc...) asparagine" evidence="1">
    <location>
        <position position="116"/>
    </location>
</feature>
<feature type="glycosylation site" description="N-linked (GlcNAc...) asparagine" evidence="1">
    <location>
        <position position="432"/>
    </location>
</feature>